<reference key="1">
    <citation type="journal article" date="1993" name="Appl. Environ. Microbiol.">
        <title>Isolation and characterization of the lantibiotic salivaricin A and its structural gene salA from Streptococcus salivarius 20P3.</title>
        <authorList>
            <person name="Ross K.F."/>
            <person name="Ronson C.W."/>
            <person name="Tagg J.R."/>
        </authorList>
    </citation>
    <scope>NUCLEOTIDE SEQUENCE [GENOMIC DNA]</scope>
    <scope>PROTEIN SEQUENCE OF 27-42</scope>
    <source>
        <strain>20P3</strain>
    </source>
</reference>
<reference key="2">
    <citation type="submission" date="2000-11" db="EMBL/GenBank/DDBJ databases">
        <title>Salivaricin A gene cluster from Streptococcus salivarius.</title>
        <authorList>
            <person name="Upton M."/>
            <person name="Tagg J.R."/>
            <person name="Jenkinson H.F."/>
        </authorList>
    </citation>
    <scope>SEQUENCE REVISION TO N-TERMINUS</scope>
    <source>
        <strain>20P3</strain>
    </source>
</reference>
<comment type="function">
    <text>Lanthionine-containing peptide antibiotic (lantibiotic) active on Gram-positive bacteria. The bactericidal activity of lantibiotics is based on depolarization of energized bacterial cytoplasmic membranes, initiated by the formation of aqueous transmembrane pores.</text>
</comment>
<comment type="PTM">
    <text>Maturation of lantibiotics involves the enzymatic conversion of Thr, and Ser into dehydrated AA and the formation of thioether bonds with cysteine. This is followed by membrane translocation and cleavage of the modified precursor.</text>
</comment>
<comment type="similarity">
    <text evidence="3">Belongs to the type A lantibiotic family.</text>
</comment>
<organism>
    <name type="scientific">Streptococcus salivarius</name>
    <dbReference type="NCBI Taxonomy" id="1304"/>
    <lineage>
        <taxon>Bacteria</taxon>
        <taxon>Bacillati</taxon>
        <taxon>Bacillota</taxon>
        <taxon>Bacilli</taxon>
        <taxon>Lactobacillales</taxon>
        <taxon>Streptococcaceae</taxon>
        <taxon>Streptococcus</taxon>
    </lineage>
</organism>
<feature type="propeptide" id="PRO_0000017132" evidence="2">
    <location>
        <begin position="1"/>
        <end position="26"/>
    </location>
</feature>
<feature type="peptide" id="PRO_0000017133" description="Lantibiotic salivaricin-A">
    <location>
        <begin position="27"/>
        <end position="48"/>
    </location>
</feature>
<feature type="cross-link" description="Beta-methyllanthionine (Thr-Cys)" evidence="1">
    <location>
        <begin position="35"/>
        <end position="40"/>
    </location>
</feature>
<feature type="cross-link" description="Beta-methyllanthionine (Thr-Cys)" evidence="1">
    <location>
        <begin position="37"/>
        <end position="47"/>
    </location>
</feature>
<feature type="cross-link" description="Lanthionine (Ser-Cys)" evidence="1">
    <location>
        <begin position="43"/>
        <end position="48"/>
    </location>
</feature>
<gene>
    <name type="primary">salA</name>
</gene>
<evidence type="ECO:0000250" key="1"/>
<evidence type="ECO:0000269" key="2">
    <source>
    </source>
</evidence>
<evidence type="ECO:0000305" key="3"/>
<proteinExistence type="evidence at protein level"/>
<sequence length="48" mass="5204">MKNSKDILNNAIEEVSEKELMEVAGGKRGSGWIATITDDCPNSVFVCC</sequence>
<protein>
    <recommendedName>
        <fullName>Lantibiotic salivaricin-A</fullName>
    </recommendedName>
</protein>
<accession>P36500</accession>
<dbReference type="EMBL" id="AY005472">
    <property type="protein sequence ID" value="AAA02867.2"/>
    <property type="molecule type" value="Genomic_DNA"/>
</dbReference>
<dbReference type="SMR" id="P36500"/>
<dbReference type="TCDB" id="1.C.21.1.4">
    <property type="family name" value="the lacticin 481 (lacticin 481) family"/>
</dbReference>
<dbReference type="GO" id="GO:0005576">
    <property type="term" value="C:extracellular region"/>
    <property type="evidence" value="ECO:0007669"/>
    <property type="project" value="InterPro"/>
</dbReference>
<dbReference type="GO" id="GO:0005102">
    <property type="term" value="F:signaling receptor binding"/>
    <property type="evidence" value="ECO:0007669"/>
    <property type="project" value="UniProtKB-KW"/>
</dbReference>
<dbReference type="GO" id="GO:0042742">
    <property type="term" value="P:defense response to bacterium"/>
    <property type="evidence" value="ECO:0007669"/>
    <property type="project" value="UniProtKB-KW"/>
</dbReference>
<dbReference type="GO" id="GO:0031640">
    <property type="term" value="P:killing of cells of another organism"/>
    <property type="evidence" value="ECO:0007669"/>
    <property type="project" value="UniProtKB-KW"/>
</dbReference>
<dbReference type="InterPro" id="IPR007682">
    <property type="entry name" value="Lantibiotic_typ-A_Lactobact"/>
</dbReference>
<dbReference type="Pfam" id="PF04604">
    <property type="entry name" value="L_biotic_typeA"/>
    <property type="match status" value="1"/>
</dbReference>
<keyword id="KW-0044">Antibiotic</keyword>
<keyword id="KW-0929">Antimicrobial</keyword>
<keyword id="KW-0078">Bacteriocin</keyword>
<keyword id="KW-0903">Direct protein sequencing</keyword>
<keyword id="KW-0425">Lantibiotic</keyword>
<keyword id="KW-0883">Thioether bond</keyword>
<name>LANA_STRSL</name>